<dbReference type="EC" id="2.7.7.56" evidence="1"/>
<dbReference type="EMBL" id="CP001172">
    <property type="protein sequence ID" value="ACJ56923.1"/>
    <property type="molecule type" value="Genomic_DNA"/>
</dbReference>
<dbReference type="RefSeq" id="WP_001217232.1">
    <property type="nucleotide sequence ID" value="NZ_CP001172.1"/>
</dbReference>
<dbReference type="SMR" id="B7H2J6"/>
<dbReference type="GeneID" id="92892004"/>
<dbReference type="HOGENOM" id="CLU_050858_0_0_6"/>
<dbReference type="Proteomes" id="UP000006924">
    <property type="component" value="Chromosome"/>
</dbReference>
<dbReference type="GO" id="GO:0000175">
    <property type="term" value="F:3'-5'-RNA exonuclease activity"/>
    <property type="evidence" value="ECO:0007669"/>
    <property type="project" value="UniProtKB-UniRule"/>
</dbReference>
<dbReference type="GO" id="GO:0000049">
    <property type="term" value="F:tRNA binding"/>
    <property type="evidence" value="ECO:0007669"/>
    <property type="project" value="UniProtKB-UniRule"/>
</dbReference>
<dbReference type="GO" id="GO:0009022">
    <property type="term" value="F:tRNA nucleotidyltransferase activity"/>
    <property type="evidence" value="ECO:0007669"/>
    <property type="project" value="UniProtKB-UniRule"/>
</dbReference>
<dbReference type="GO" id="GO:0016075">
    <property type="term" value="P:rRNA catabolic process"/>
    <property type="evidence" value="ECO:0007669"/>
    <property type="project" value="UniProtKB-UniRule"/>
</dbReference>
<dbReference type="GO" id="GO:0006364">
    <property type="term" value="P:rRNA processing"/>
    <property type="evidence" value="ECO:0007669"/>
    <property type="project" value="UniProtKB-KW"/>
</dbReference>
<dbReference type="GO" id="GO:0008033">
    <property type="term" value="P:tRNA processing"/>
    <property type="evidence" value="ECO:0007669"/>
    <property type="project" value="UniProtKB-UniRule"/>
</dbReference>
<dbReference type="CDD" id="cd11362">
    <property type="entry name" value="RNase_PH_bact"/>
    <property type="match status" value="1"/>
</dbReference>
<dbReference type="FunFam" id="3.30.230.70:FF:000003">
    <property type="entry name" value="Ribonuclease PH"/>
    <property type="match status" value="1"/>
</dbReference>
<dbReference type="Gene3D" id="3.30.230.70">
    <property type="entry name" value="GHMP Kinase, N-terminal domain"/>
    <property type="match status" value="1"/>
</dbReference>
<dbReference type="HAMAP" id="MF_00564">
    <property type="entry name" value="RNase_PH"/>
    <property type="match status" value="1"/>
</dbReference>
<dbReference type="InterPro" id="IPR001247">
    <property type="entry name" value="ExoRNase_PH_dom1"/>
</dbReference>
<dbReference type="InterPro" id="IPR015847">
    <property type="entry name" value="ExoRNase_PH_dom2"/>
</dbReference>
<dbReference type="InterPro" id="IPR036345">
    <property type="entry name" value="ExoRNase_PH_dom2_sf"/>
</dbReference>
<dbReference type="InterPro" id="IPR027408">
    <property type="entry name" value="PNPase/RNase_PH_dom_sf"/>
</dbReference>
<dbReference type="InterPro" id="IPR020568">
    <property type="entry name" value="Ribosomal_Su5_D2-typ_SF"/>
</dbReference>
<dbReference type="InterPro" id="IPR050080">
    <property type="entry name" value="RNase_PH"/>
</dbReference>
<dbReference type="InterPro" id="IPR002381">
    <property type="entry name" value="RNase_PH_bac-type"/>
</dbReference>
<dbReference type="InterPro" id="IPR018336">
    <property type="entry name" value="RNase_PH_CS"/>
</dbReference>
<dbReference type="NCBIfam" id="TIGR01966">
    <property type="entry name" value="RNasePH"/>
    <property type="match status" value="1"/>
</dbReference>
<dbReference type="PANTHER" id="PTHR11953">
    <property type="entry name" value="EXOSOME COMPLEX COMPONENT"/>
    <property type="match status" value="1"/>
</dbReference>
<dbReference type="PANTHER" id="PTHR11953:SF0">
    <property type="entry name" value="EXOSOME COMPLEX COMPONENT RRP41"/>
    <property type="match status" value="1"/>
</dbReference>
<dbReference type="Pfam" id="PF01138">
    <property type="entry name" value="RNase_PH"/>
    <property type="match status" value="1"/>
</dbReference>
<dbReference type="Pfam" id="PF03725">
    <property type="entry name" value="RNase_PH_C"/>
    <property type="match status" value="1"/>
</dbReference>
<dbReference type="SUPFAM" id="SSF55666">
    <property type="entry name" value="Ribonuclease PH domain 2-like"/>
    <property type="match status" value="1"/>
</dbReference>
<dbReference type="SUPFAM" id="SSF54211">
    <property type="entry name" value="Ribosomal protein S5 domain 2-like"/>
    <property type="match status" value="1"/>
</dbReference>
<dbReference type="PROSITE" id="PS01277">
    <property type="entry name" value="RIBONUCLEASE_PH"/>
    <property type="match status" value="1"/>
</dbReference>
<comment type="function">
    <text evidence="1">Phosphorolytic 3'-5' exoribonuclease that plays an important role in tRNA 3'-end maturation. Removes nucleotide residues following the 3'-CCA terminus of tRNAs; can also add nucleotides to the ends of RNA molecules by using nucleoside diphosphates as substrates, but this may not be physiologically important. Probably plays a role in initiation of 16S rRNA degradation (leading to ribosome degradation) during starvation.</text>
</comment>
<comment type="catalytic activity">
    <reaction evidence="1">
        <text>tRNA(n+1) + phosphate = tRNA(n) + a ribonucleoside 5'-diphosphate</text>
        <dbReference type="Rhea" id="RHEA:10628"/>
        <dbReference type="Rhea" id="RHEA-COMP:17343"/>
        <dbReference type="Rhea" id="RHEA-COMP:17344"/>
        <dbReference type="ChEBI" id="CHEBI:43474"/>
        <dbReference type="ChEBI" id="CHEBI:57930"/>
        <dbReference type="ChEBI" id="CHEBI:173114"/>
        <dbReference type="EC" id="2.7.7.56"/>
    </reaction>
</comment>
<comment type="subunit">
    <text evidence="1">Homohexameric ring arranged as a trimer of dimers.</text>
</comment>
<comment type="similarity">
    <text evidence="1">Belongs to the RNase PH family.</text>
</comment>
<accession>B7H2J6</accession>
<keyword id="KW-0548">Nucleotidyltransferase</keyword>
<keyword id="KW-0694">RNA-binding</keyword>
<keyword id="KW-0698">rRNA processing</keyword>
<keyword id="KW-0808">Transferase</keyword>
<keyword id="KW-0819">tRNA processing</keyword>
<keyword id="KW-0820">tRNA-binding</keyword>
<reference key="1">
    <citation type="journal article" date="2008" name="J. Bacteriol.">
        <title>Comparative genome sequence analysis of multidrug-resistant Acinetobacter baumannii.</title>
        <authorList>
            <person name="Adams M.D."/>
            <person name="Goglin K."/>
            <person name="Molyneaux N."/>
            <person name="Hujer K.M."/>
            <person name="Lavender H."/>
            <person name="Jamison J.J."/>
            <person name="MacDonald I.J."/>
            <person name="Martin K.M."/>
            <person name="Russo T."/>
            <person name="Campagnari A.A."/>
            <person name="Hujer A.M."/>
            <person name="Bonomo R.A."/>
            <person name="Gill S.R."/>
        </authorList>
    </citation>
    <scope>NUCLEOTIDE SEQUENCE [LARGE SCALE GENOMIC DNA]</scope>
    <source>
        <strain>AB307-0294</strain>
    </source>
</reference>
<evidence type="ECO:0000255" key="1">
    <source>
        <dbReference type="HAMAP-Rule" id="MF_00564"/>
    </source>
</evidence>
<proteinExistence type="inferred from homology"/>
<gene>
    <name evidence="1" type="primary">rph</name>
    <name type="ordered locus">ABBFA_003469</name>
</gene>
<name>RNPH_ACIB3</name>
<organism>
    <name type="scientific">Acinetobacter baumannii (strain AB307-0294)</name>
    <dbReference type="NCBI Taxonomy" id="557600"/>
    <lineage>
        <taxon>Bacteria</taxon>
        <taxon>Pseudomonadati</taxon>
        <taxon>Pseudomonadota</taxon>
        <taxon>Gammaproteobacteria</taxon>
        <taxon>Moraxellales</taxon>
        <taxon>Moraxellaceae</taxon>
        <taxon>Acinetobacter</taxon>
        <taxon>Acinetobacter calcoaceticus/baumannii complex</taxon>
    </lineage>
</organism>
<feature type="chain" id="PRO_1000129306" description="Ribonuclease PH">
    <location>
        <begin position="1"/>
        <end position="238"/>
    </location>
</feature>
<feature type="binding site" evidence="1">
    <location>
        <position position="86"/>
    </location>
    <ligand>
        <name>phosphate</name>
        <dbReference type="ChEBI" id="CHEBI:43474"/>
        <note>substrate</note>
    </ligand>
</feature>
<feature type="binding site" evidence="1">
    <location>
        <begin position="124"/>
        <end position="126"/>
    </location>
    <ligand>
        <name>phosphate</name>
        <dbReference type="ChEBI" id="CHEBI:43474"/>
        <note>substrate</note>
    </ligand>
</feature>
<protein>
    <recommendedName>
        <fullName evidence="1">Ribonuclease PH</fullName>
        <shortName evidence="1">RNase PH</shortName>
        <ecNumber evidence="1">2.7.7.56</ecNumber>
    </recommendedName>
    <alternativeName>
        <fullName evidence="1">tRNA nucleotidyltransferase</fullName>
    </alternativeName>
</protein>
<sequence length="238" mass="26296">MRIDQRALDQLREVKITRNYTRYAEGSVLVEFGHTKVLCTASIDNSVPRFLKGQGQGWVTAEYGMLPRSTHSRCDREAARGKQTGRTQEIQRLIGRSLRAMVDLKKLGENTITIDCDVIQADGGTRTASITGAAVALVDAMNVLLAQKKIKQDPLKGLVAAISVGMYQDEVLLDLCYEEDSNCQTDLNVVMTQAGEFIEIQGTAEDKPFTRAQSNAMLEMAEKGIAELIKKQQEALGW</sequence>